<keyword id="KW-0233">DNA recombination</keyword>
<keyword id="KW-0238">DNA-binding</keyword>
<keyword id="KW-0614">Plasmid</keyword>
<keyword id="KW-1185">Reference proteome</keyword>
<keyword id="KW-0814">Transposable element</keyword>
<keyword id="KW-0815">Transposition</keyword>
<dbReference type="EMBL" id="AE004437">
    <property type="protein sequence ID" value="AAG18820.1"/>
    <property type="status" value="ALT_INIT"/>
    <property type="molecule type" value="Genomic_DNA"/>
</dbReference>
<dbReference type="EMBL" id="AF016485">
    <property type="protein sequence ID" value="AAC82820.1"/>
    <property type="status" value="ALT_INIT"/>
    <property type="molecule type" value="Genomic_DNA"/>
</dbReference>
<dbReference type="EMBL" id="AF016485">
    <property type="protein sequence ID" value="AAC82957.1"/>
    <property type="status" value="ALT_INIT"/>
    <property type="molecule type" value="Genomic_DNA"/>
</dbReference>
<dbReference type="EMBL" id="AE004438">
    <property type="protein sequence ID" value="AAG20738.1"/>
    <property type="status" value="ALT_INIT"/>
    <property type="molecule type" value="Genomic_DNA"/>
</dbReference>
<dbReference type="EMBL" id="AE004438">
    <property type="protein sequence ID" value="AAG21025.1"/>
    <property type="status" value="ALT_INIT"/>
    <property type="molecule type" value="Genomic_DNA"/>
</dbReference>
<dbReference type="EMBL" id="AE004438">
    <property type="protein sequence ID" value="AAG21070.1"/>
    <property type="status" value="ALT_INIT"/>
    <property type="molecule type" value="Genomic_DNA"/>
</dbReference>
<dbReference type="PIR" id="H84181">
    <property type="entry name" value="H84181"/>
</dbReference>
<dbReference type="PIR" id="T08253">
    <property type="entry name" value="T08253"/>
</dbReference>
<dbReference type="RefSeq" id="WP_010903158.1">
    <property type="nucleotide sequence ID" value="NZ_BK010831.1"/>
</dbReference>
<dbReference type="STRING" id="64091.VNG_0213H"/>
<dbReference type="PaxDb" id="64091-VNG_0213H"/>
<dbReference type="KEGG" id="hal:AAC82820.1"/>
<dbReference type="KEGG" id="hal:AAC82957.1"/>
<dbReference type="KEGG" id="hal:VNG_0213H"/>
<dbReference type="KEGG" id="hal:VNG_6043H"/>
<dbReference type="KEGG" id="hal:VNG_6421H"/>
<dbReference type="KEGG" id="hal:VNG_6483H"/>
<dbReference type="PATRIC" id="fig|64091.14.peg.154"/>
<dbReference type="HOGENOM" id="CLU_076514_0_0_2"/>
<dbReference type="InParanoid" id="P0CX05"/>
<dbReference type="OrthoDB" id="290600at2157"/>
<dbReference type="Proteomes" id="UP000000554">
    <property type="component" value="Chromosome"/>
</dbReference>
<dbReference type="Proteomes" id="UP000000554">
    <property type="component" value="Plasmid pNRC100"/>
</dbReference>
<dbReference type="Proteomes" id="UP000000554">
    <property type="component" value="Plasmid pNRC200"/>
</dbReference>
<dbReference type="GO" id="GO:0003677">
    <property type="term" value="F:DNA binding"/>
    <property type="evidence" value="ECO:0007669"/>
    <property type="project" value="UniProtKB-KW"/>
</dbReference>
<dbReference type="GO" id="GO:0004803">
    <property type="term" value="F:transposase activity"/>
    <property type="evidence" value="ECO:0007669"/>
    <property type="project" value="InterPro"/>
</dbReference>
<dbReference type="GO" id="GO:0006313">
    <property type="term" value="P:DNA transposition"/>
    <property type="evidence" value="ECO:0007669"/>
    <property type="project" value="InterPro"/>
</dbReference>
<dbReference type="InterPro" id="IPR002559">
    <property type="entry name" value="Transposase_11"/>
</dbReference>
<dbReference type="Pfam" id="PF01609">
    <property type="entry name" value="DDE_Tnp_1"/>
    <property type="match status" value="1"/>
</dbReference>
<accession>P0CX05</accession>
<accession>P23464</accession>
<accession>Q9HI33</accession>
<comment type="function">
    <text evidence="1">Involved in the transposition of the insertion sequence ISH11.</text>
</comment>
<comment type="similarity">
    <text evidence="2">Belongs to the transposase 11 family.</text>
</comment>
<comment type="caution">
    <text evidence="2">This insertion-derived sequence is found in six copies in NRC-1, one copy on the chromosome, two on plasmid pNRC100 and three on plasmid pNRC200.</text>
</comment>
<comment type="sequence caution" evidence="2">
    <conflict type="erroneous initiation">
        <sequence resource="EMBL-CDS" id="AAC82820"/>
    </conflict>
    <text>Extended N-terminus.</text>
</comment>
<comment type="sequence caution" evidence="2">
    <conflict type="erroneous initiation">
        <sequence resource="EMBL-CDS" id="AAC82957"/>
    </conflict>
    <text>Extended N-terminus.</text>
</comment>
<comment type="sequence caution" evidence="2">
    <conflict type="erroneous initiation">
        <sequence resource="EMBL-CDS" id="AAG18820"/>
    </conflict>
    <text>Extended N-terminus.</text>
</comment>
<comment type="sequence caution" evidence="2">
    <conflict type="erroneous initiation">
        <sequence resource="EMBL-CDS" id="AAG20738"/>
    </conflict>
    <text>Extended N-terminus.</text>
</comment>
<comment type="sequence caution" evidence="2">
    <conflict type="erroneous initiation">
        <sequence resource="EMBL-CDS" id="AAG21025"/>
    </conflict>
    <text>Extended N-terminus.</text>
</comment>
<comment type="sequence caution" evidence="2">
    <conflict type="erroneous initiation">
        <sequence resource="EMBL-CDS" id="AAG21070"/>
    </conflict>
    <text>Extended N-terminus.</text>
</comment>
<organism>
    <name type="scientific">Halobacterium salinarum (strain ATCC 700922 / JCM 11081 / NRC-1)</name>
    <name type="common">Halobacterium halobium</name>
    <dbReference type="NCBI Taxonomy" id="64091"/>
    <lineage>
        <taxon>Archaea</taxon>
        <taxon>Methanobacteriati</taxon>
        <taxon>Methanobacteriota</taxon>
        <taxon>Stenosarchaea group</taxon>
        <taxon>Halobacteria</taxon>
        <taxon>Halobacteriales</taxon>
        <taxon>Halobacteriaceae</taxon>
        <taxon>Halobacterium</taxon>
        <taxon>Halobacterium salinarum NRC-34001</taxon>
    </lineage>
</organism>
<gene>
    <name type="ordered locus">VNG_0213H</name>
</gene>
<gene>
    <name type="ordered locus">VNG_5045H</name>
</gene>
<gene>
    <name type="ordered locus">VNG_5252H</name>
</gene>
<gene>
    <name type="ordered locus">VNG_6043H</name>
</gene>
<gene>
    <name type="ordered locus">VNG_6421H</name>
</gene>
<gene>
    <name type="ordered locus">VNG_6483H</name>
</gene>
<geneLocation type="plasmid">
    <name>pNRC100</name>
</geneLocation>
<geneLocation type="plasmid">
    <name>pNRC200</name>
</geneLocation>
<reference key="1">
    <citation type="journal article" date="1998" name="Genome Res.">
        <title>Snapshot of a large dynamic replicon in a halophilic archaeon: megaplasmid or minichromosome?</title>
        <authorList>
            <person name="Ng W.V."/>
            <person name="Ciufo S.A."/>
            <person name="Smith T.M."/>
            <person name="Bumgarner R.E."/>
            <person name="Baskin D."/>
            <person name="Faust J."/>
            <person name="Hall B."/>
            <person name="Loretz C."/>
            <person name="Seto J."/>
            <person name="Slagel J."/>
            <person name="Hood L."/>
            <person name="DasSarma S."/>
        </authorList>
    </citation>
    <scope>NUCLEOTIDE SEQUENCE [LARGE SCALE GENOMIC DNA]</scope>
    <source>
        <strain>ATCC 700922 / JCM 11081 / NRC-1</strain>
        <plasmid>pNRC100</plasmid>
    </source>
</reference>
<reference key="2">
    <citation type="journal article" date="2000" name="Proc. Natl. Acad. Sci. U.S.A.">
        <title>Genome sequence of Halobacterium species NRC-1.</title>
        <authorList>
            <person name="Ng W.V."/>
            <person name="Kennedy S.P."/>
            <person name="Mahairas G.G."/>
            <person name="Berquist B."/>
            <person name="Pan M."/>
            <person name="Shukla H.D."/>
            <person name="Lasky S.R."/>
            <person name="Baliga N.S."/>
            <person name="Thorsson V."/>
            <person name="Sbrogna J."/>
            <person name="Swartzell S."/>
            <person name="Weir D."/>
            <person name="Hall J."/>
            <person name="Dahl T.A."/>
            <person name="Welti R."/>
            <person name="Goo Y.A."/>
            <person name="Leithauser B."/>
            <person name="Keller K."/>
            <person name="Cruz R."/>
            <person name="Danson M.J."/>
            <person name="Hough D.W."/>
            <person name="Maddocks D.G."/>
            <person name="Jablonski P.E."/>
            <person name="Krebs M.P."/>
            <person name="Angevine C.M."/>
            <person name="Dale H."/>
            <person name="Isenbarger T.A."/>
            <person name="Peck R.F."/>
            <person name="Pohlschroder M."/>
            <person name="Spudich J.L."/>
            <person name="Jung K.-H."/>
            <person name="Alam M."/>
            <person name="Freitas T."/>
            <person name="Hou S."/>
            <person name="Daniels C.J."/>
            <person name="Dennis P.P."/>
            <person name="Omer A.D."/>
            <person name="Ebhardt H."/>
            <person name="Lowe T.M."/>
            <person name="Liang P."/>
            <person name="Riley M."/>
            <person name="Hood L."/>
            <person name="DasSarma S."/>
        </authorList>
    </citation>
    <scope>NUCLEOTIDE SEQUENCE [LARGE SCALE GENOMIC DNA]</scope>
    <source>
        <strain>ATCC 700922 / JCM 11081 / NRC-1</strain>
        <plasmid>pNRC200</plasmid>
    </source>
</reference>
<sequence length="330" mass="37377">MSPATLQDDPSVDSFFNVVETETLALFEHLSFEFLEEFDVFAPAETGRTRDHEPPELMRGFLHCYYKDIYGIRPVERELRNTVVWLSCGFDRPPSRDAVDRFLTDLEHVVNKVFDHLVEQAALRGLLDLTYCIDSTDVRAMPADQDASKCYDPTDDEYYHGYGCTIVSTGQKIPIAAEFTESKQAPEETAMRVTRDALAVAKPIWMVGDSAYDTLDWHDHLLAAGVVPVAPYNARNTDDPKDIEYRVEDRIEQHSEDVQLKQSTLDETYNRRTGVERTNESVKDCGLGRTHARGRVHARAQVFLALCLRLVVAITNYERGDNPGSPIITV</sequence>
<evidence type="ECO:0000250" key="1"/>
<evidence type="ECO:0000305" key="2"/>
<proteinExistence type="inferred from homology"/>
<protein>
    <recommendedName>
        <fullName>Probable transposase for insertion sequence element ISH11</fullName>
    </recommendedName>
</protein>
<name>TH11_HALSA</name>
<feature type="chain" id="PRO_0000173312" description="Probable transposase for insertion sequence element ISH11">
    <location>
        <begin position="1"/>
        <end position="330"/>
    </location>
</feature>